<keyword id="KW-0227">DNA damage</keyword>
<keyword id="KW-0234">DNA repair</keyword>
<keyword id="KW-0378">Hydrolase</keyword>
<name>3MGH_FRATO</name>
<sequence>MNNLEAILRLKTIDAAKKLLGHFLVSKYNNKILIGKIVETEAYLYNDPACHSYSNRTKRNSMMYAQAGTSYVYFTYGMHYCFNVVTADVGIGEAILIRALEPIAGIEQMQLNRSKTKLIDLCSGPAKLTQALNINLKDNGINLLDKDSSILLRYNNDLINEIDIVQTQRIGISKAKDMPYRFYIKDNIFVSKK</sequence>
<comment type="similarity">
    <text evidence="1">Belongs to the DNA glycosylase MPG family.</text>
</comment>
<gene>
    <name type="ordered locus">FTH_0919</name>
</gene>
<protein>
    <recommendedName>
        <fullName evidence="1">Putative 3-methyladenine DNA glycosylase</fullName>
        <ecNumber evidence="1">3.2.2.-</ecNumber>
    </recommendedName>
</protein>
<accession>Q0BM56</accession>
<feature type="chain" id="PRO_0000265021" description="Putative 3-methyladenine DNA glycosylase">
    <location>
        <begin position="1"/>
        <end position="193"/>
    </location>
</feature>
<proteinExistence type="inferred from homology"/>
<evidence type="ECO:0000255" key="1">
    <source>
        <dbReference type="HAMAP-Rule" id="MF_00527"/>
    </source>
</evidence>
<reference key="1">
    <citation type="journal article" date="2006" name="J. Bacteriol.">
        <title>Chromosome rearrangement and diversification of Francisella tularensis revealed by the type B (OSU18) genome sequence.</title>
        <authorList>
            <person name="Petrosino J.F."/>
            <person name="Xiang Q."/>
            <person name="Karpathy S.E."/>
            <person name="Jiang H."/>
            <person name="Yerrapragada S."/>
            <person name="Liu Y."/>
            <person name="Gioia J."/>
            <person name="Hemphill L."/>
            <person name="Gonzalez A."/>
            <person name="Raghavan T.M."/>
            <person name="Uzman A."/>
            <person name="Fox G.E."/>
            <person name="Highlander S."/>
            <person name="Reichard M."/>
            <person name="Morton R.J."/>
            <person name="Clinkenbeard K.D."/>
            <person name="Weinstock G.M."/>
        </authorList>
    </citation>
    <scope>NUCLEOTIDE SEQUENCE [LARGE SCALE GENOMIC DNA]</scope>
    <source>
        <strain>OSU18</strain>
    </source>
</reference>
<dbReference type="EC" id="3.2.2.-" evidence="1"/>
<dbReference type="EMBL" id="CP000437">
    <property type="protein sequence ID" value="ABI82828.1"/>
    <property type="molecule type" value="Genomic_DNA"/>
</dbReference>
<dbReference type="RefSeq" id="WP_003018833.1">
    <property type="nucleotide sequence ID" value="NC_017463.1"/>
</dbReference>
<dbReference type="SMR" id="Q0BM56"/>
<dbReference type="KEGG" id="fth:FTH_0919"/>
<dbReference type="GO" id="GO:0003905">
    <property type="term" value="F:alkylbase DNA N-glycosylase activity"/>
    <property type="evidence" value="ECO:0007669"/>
    <property type="project" value="InterPro"/>
</dbReference>
<dbReference type="GO" id="GO:0003677">
    <property type="term" value="F:DNA binding"/>
    <property type="evidence" value="ECO:0007669"/>
    <property type="project" value="InterPro"/>
</dbReference>
<dbReference type="GO" id="GO:0006284">
    <property type="term" value="P:base-excision repair"/>
    <property type="evidence" value="ECO:0007669"/>
    <property type="project" value="InterPro"/>
</dbReference>
<dbReference type="CDD" id="cd00540">
    <property type="entry name" value="AAG"/>
    <property type="match status" value="1"/>
</dbReference>
<dbReference type="FunFam" id="3.10.300.10:FF:000001">
    <property type="entry name" value="Putative 3-methyladenine DNA glycosylase"/>
    <property type="match status" value="1"/>
</dbReference>
<dbReference type="Gene3D" id="3.10.300.10">
    <property type="entry name" value="Methylpurine-DNA glycosylase (MPG)"/>
    <property type="match status" value="1"/>
</dbReference>
<dbReference type="HAMAP" id="MF_00527">
    <property type="entry name" value="3MGH"/>
    <property type="match status" value="1"/>
</dbReference>
<dbReference type="InterPro" id="IPR011034">
    <property type="entry name" value="Formyl_transferase-like_C_sf"/>
</dbReference>
<dbReference type="InterPro" id="IPR003180">
    <property type="entry name" value="MPG"/>
</dbReference>
<dbReference type="InterPro" id="IPR036995">
    <property type="entry name" value="MPG_sf"/>
</dbReference>
<dbReference type="NCBIfam" id="TIGR00567">
    <property type="entry name" value="3mg"/>
    <property type="match status" value="1"/>
</dbReference>
<dbReference type="NCBIfam" id="NF002003">
    <property type="entry name" value="PRK00802.1-3"/>
    <property type="match status" value="1"/>
</dbReference>
<dbReference type="PANTHER" id="PTHR10429">
    <property type="entry name" value="DNA-3-METHYLADENINE GLYCOSYLASE"/>
    <property type="match status" value="1"/>
</dbReference>
<dbReference type="PANTHER" id="PTHR10429:SF0">
    <property type="entry name" value="DNA-3-METHYLADENINE GLYCOSYLASE"/>
    <property type="match status" value="1"/>
</dbReference>
<dbReference type="Pfam" id="PF02245">
    <property type="entry name" value="Pur_DNA_glyco"/>
    <property type="match status" value="1"/>
</dbReference>
<dbReference type="SUPFAM" id="SSF50486">
    <property type="entry name" value="FMT C-terminal domain-like"/>
    <property type="match status" value="1"/>
</dbReference>
<organism>
    <name type="scientific">Francisella tularensis subsp. holarctica (strain OSU18)</name>
    <dbReference type="NCBI Taxonomy" id="393011"/>
    <lineage>
        <taxon>Bacteria</taxon>
        <taxon>Pseudomonadati</taxon>
        <taxon>Pseudomonadota</taxon>
        <taxon>Gammaproteobacteria</taxon>
        <taxon>Thiotrichales</taxon>
        <taxon>Francisellaceae</taxon>
        <taxon>Francisella</taxon>
    </lineage>
</organism>